<protein>
    <recommendedName>
        <fullName evidence="1">Ubiquinone/menaquinone biosynthesis C-methyltransferase UbiE</fullName>
        <ecNumber evidence="1">2.1.1.163</ecNumber>
        <ecNumber evidence="1">2.1.1.201</ecNumber>
    </recommendedName>
    <alternativeName>
        <fullName evidence="1">2-methoxy-6-polyprenyl-1,4-benzoquinol methylase</fullName>
    </alternativeName>
    <alternativeName>
        <fullName evidence="1">Demethylmenaquinone methyltransferase</fullName>
    </alternativeName>
</protein>
<dbReference type="EC" id="2.1.1.163" evidence="1"/>
<dbReference type="EC" id="2.1.1.201" evidence="1"/>
<dbReference type="EMBL" id="CP000308">
    <property type="protein sequence ID" value="ABG12212.1"/>
    <property type="molecule type" value="Genomic_DNA"/>
</dbReference>
<dbReference type="RefSeq" id="WP_002211533.1">
    <property type="nucleotide sequence ID" value="NZ_CP009906.1"/>
</dbReference>
<dbReference type="SMR" id="Q1CBG0"/>
<dbReference type="GeneID" id="57974927"/>
<dbReference type="KEGG" id="ypa:YPA_0243"/>
<dbReference type="UniPathway" id="UPA00079">
    <property type="reaction ID" value="UER00169"/>
</dbReference>
<dbReference type="UniPathway" id="UPA00232"/>
<dbReference type="Proteomes" id="UP000001971">
    <property type="component" value="Chromosome"/>
</dbReference>
<dbReference type="GO" id="GO:0008425">
    <property type="term" value="F:2-methoxy-6-polyprenyl-1,4-benzoquinol methyltransferase activity"/>
    <property type="evidence" value="ECO:0007669"/>
    <property type="project" value="UniProtKB-UniRule"/>
</dbReference>
<dbReference type="GO" id="GO:0043770">
    <property type="term" value="F:demethylmenaquinone methyltransferase activity"/>
    <property type="evidence" value="ECO:0007669"/>
    <property type="project" value="UniProtKB-UniRule"/>
</dbReference>
<dbReference type="GO" id="GO:0009060">
    <property type="term" value="P:aerobic respiration"/>
    <property type="evidence" value="ECO:0007669"/>
    <property type="project" value="UniProtKB-UniRule"/>
</dbReference>
<dbReference type="GO" id="GO:0009234">
    <property type="term" value="P:menaquinone biosynthetic process"/>
    <property type="evidence" value="ECO:0007669"/>
    <property type="project" value="UniProtKB-UniRule"/>
</dbReference>
<dbReference type="GO" id="GO:0032259">
    <property type="term" value="P:methylation"/>
    <property type="evidence" value="ECO:0007669"/>
    <property type="project" value="UniProtKB-KW"/>
</dbReference>
<dbReference type="CDD" id="cd02440">
    <property type="entry name" value="AdoMet_MTases"/>
    <property type="match status" value="1"/>
</dbReference>
<dbReference type="FunFam" id="3.40.50.150:FF:000014">
    <property type="entry name" value="Ubiquinone/menaquinone biosynthesis C-methyltransferase UbiE"/>
    <property type="match status" value="1"/>
</dbReference>
<dbReference type="Gene3D" id="3.40.50.150">
    <property type="entry name" value="Vaccinia Virus protein VP39"/>
    <property type="match status" value="1"/>
</dbReference>
<dbReference type="HAMAP" id="MF_01813">
    <property type="entry name" value="MenG_UbiE_methyltr"/>
    <property type="match status" value="1"/>
</dbReference>
<dbReference type="InterPro" id="IPR029063">
    <property type="entry name" value="SAM-dependent_MTases_sf"/>
</dbReference>
<dbReference type="InterPro" id="IPR004033">
    <property type="entry name" value="UbiE/COQ5_MeTrFase"/>
</dbReference>
<dbReference type="InterPro" id="IPR023576">
    <property type="entry name" value="UbiE/COQ5_MeTrFase_CS"/>
</dbReference>
<dbReference type="NCBIfam" id="TIGR01934">
    <property type="entry name" value="MenG_MenH_UbiE"/>
    <property type="match status" value="1"/>
</dbReference>
<dbReference type="NCBIfam" id="NF001240">
    <property type="entry name" value="PRK00216.1-1"/>
    <property type="match status" value="1"/>
</dbReference>
<dbReference type="NCBIfam" id="NF001242">
    <property type="entry name" value="PRK00216.1-3"/>
    <property type="match status" value="1"/>
</dbReference>
<dbReference type="NCBIfam" id="NF001244">
    <property type="entry name" value="PRK00216.1-5"/>
    <property type="match status" value="1"/>
</dbReference>
<dbReference type="PANTHER" id="PTHR43591:SF24">
    <property type="entry name" value="2-METHOXY-6-POLYPRENYL-1,4-BENZOQUINOL METHYLASE, MITOCHONDRIAL"/>
    <property type="match status" value="1"/>
</dbReference>
<dbReference type="PANTHER" id="PTHR43591">
    <property type="entry name" value="METHYLTRANSFERASE"/>
    <property type="match status" value="1"/>
</dbReference>
<dbReference type="Pfam" id="PF01209">
    <property type="entry name" value="Ubie_methyltran"/>
    <property type="match status" value="1"/>
</dbReference>
<dbReference type="SUPFAM" id="SSF53335">
    <property type="entry name" value="S-adenosyl-L-methionine-dependent methyltransferases"/>
    <property type="match status" value="1"/>
</dbReference>
<dbReference type="PROSITE" id="PS51608">
    <property type="entry name" value="SAM_MT_UBIE"/>
    <property type="match status" value="1"/>
</dbReference>
<dbReference type="PROSITE" id="PS01183">
    <property type="entry name" value="UBIE_1"/>
    <property type="match status" value="1"/>
</dbReference>
<dbReference type="PROSITE" id="PS01184">
    <property type="entry name" value="UBIE_2"/>
    <property type="match status" value="1"/>
</dbReference>
<sequence>MVDQEKETTHFGFRTVAKEQKEGMVAEVFHSVAAKYDLMNDLMSFGVHRIWKRFTVDCSGVRRGQRVLDLAGGTGDLTAKFSRLVGEQGEVILADINESMLRMGREKLRDKGIVGNVSYVQANAEALPFPDNFFDCITISFGLRNVTEKEKALRSMFRVLKPGGRLLVLEFSKPLLEPLSKAYDAYSFHILPKIGELVAQDAESYRYLAESIRMHPDQETLKGMMADAGFENVTYSNLTGGIVALHRGFKF</sequence>
<keyword id="KW-0474">Menaquinone biosynthesis</keyword>
<keyword id="KW-0489">Methyltransferase</keyword>
<keyword id="KW-0949">S-adenosyl-L-methionine</keyword>
<keyword id="KW-0808">Transferase</keyword>
<keyword id="KW-0831">Ubiquinone biosynthesis</keyword>
<gene>
    <name evidence="1" type="primary">ubiE</name>
    <name type="ordered locus">YPA_0243</name>
</gene>
<feature type="chain" id="PRO_1000056317" description="Ubiquinone/menaquinone biosynthesis C-methyltransferase UbiE">
    <location>
        <begin position="1"/>
        <end position="251"/>
    </location>
</feature>
<feature type="binding site" evidence="1">
    <location>
        <position position="74"/>
    </location>
    <ligand>
        <name>S-adenosyl-L-methionine</name>
        <dbReference type="ChEBI" id="CHEBI:59789"/>
    </ligand>
</feature>
<feature type="binding site" evidence="1">
    <location>
        <position position="95"/>
    </location>
    <ligand>
        <name>S-adenosyl-L-methionine</name>
        <dbReference type="ChEBI" id="CHEBI:59789"/>
    </ligand>
</feature>
<feature type="binding site" evidence="1">
    <location>
        <begin position="123"/>
        <end position="124"/>
    </location>
    <ligand>
        <name>S-adenosyl-L-methionine</name>
        <dbReference type="ChEBI" id="CHEBI:59789"/>
    </ligand>
</feature>
<feature type="binding site" evidence="1">
    <location>
        <position position="140"/>
    </location>
    <ligand>
        <name>S-adenosyl-L-methionine</name>
        <dbReference type="ChEBI" id="CHEBI:59789"/>
    </ligand>
</feature>
<evidence type="ECO:0000255" key="1">
    <source>
        <dbReference type="HAMAP-Rule" id="MF_01813"/>
    </source>
</evidence>
<name>UBIE_YERPA</name>
<comment type="function">
    <text evidence="1">Methyltransferase required for the conversion of demethylmenaquinol (DMKH2) to menaquinol (MKH2) and the conversion of 2-polyprenyl-6-methoxy-1,4-benzoquinol (DDMQH2) to 2-polyprenyl-3-methyl-6-methoxy-1,4-benzoquinol (DMQH2).</text>
</comment>
<comment type="catalytic activity">
    <reaction evidence="1">
        <text>a 2-demethylmenaquinol + S-adenosyl-L-methionine = a menaquinol + S-adenosyl-L-homocysteine + H(+)</text>
        <dbReference type="Rhea" id="RHEA:42640"/>
        <dbReference type="Rhea" id="RHEA-COMP:9539"/>
        <dbReference type="Rhea" id="RHEA-COMP:9563"/>
        <dbReference type="ChEBI" id="CHEBI:15378"/>
        <dbReference type="ChEBI" id="CHEBI:18151"/>
        <dbReference type="ChEBI" id="CHEBI:55437"/>
        <dbReference type="ChEBI" id="CHEBI:57856"/>
        <dbReference type="ChEBI" id="CHEBI:59789"/>
        <dbReference type="EC" id="2.1.1.163"/>
    </reaction>
</comment>
<comment type="catalytic activity">
    <reaction evidence="1">
        <text>a 2-methoxy-6-(all-trans-polyprenyl)benzene-1,4-diol + S-adenosyl-L-methionine = a 5-methoxy-2-methyl-3-(all-trans-polyprenyl)benzene-1,4-diol + S-adenosyl-L-homocysteine + H(+)</text>
        <dbReference type="Rhea" id="RHEA:28286"/>
        <dbReference type="Rhea" id="RHEA-COMP:10858"/>
        <dbReference type="Rhea" id="RHEA-COMP:10859"/>
        <dbReference type="ChEBI" id="CHEBI:15378"/>
        <dbReference type="ChEBI" id="CHEBI:57856"/>
        <dbReference type="ChEBI" id="CHEBI:59789"/>
        <dbReference type="ChEBI" id="CHEBI:84166"/>
        <dbReference type="ChEBI" id="CHEBI:84167"/>
        <dbReference type="EC" id="2.1.1.201"/>
    </reaction>
</comment>
<comment type="pathway">
    <text evidence="1">Quinol/quinone metabolism; menaquinone biosynthesis; menaquinol from 1,4-dihydroxy-2-naphthoate: step 2/2.</text>
</comment>
<comment type="pathway">
    <text evidence="1">Cofactor biosynthesis; ubiquinone biosynthesis.</text>
</comment>
<comment type="similarity">
    <text evidence="1">Belongs to the class I-like SAM-binding methyltransferase superfamily. MenG/UbiE family.</text>
</comment>
<reference key="1">
    <citation type="journal article" date="2006" name="J. Bacteriol.">
        <title>Complete genome sequence of Yersinia pestis strains Antiqua and Nepal516: evidence of gene reduction in an emerging pathogen.</title>
        <authorList>
            <person name="Chain P.S.G."/>
            <person name="Hu P."/>
            <person name="Malfatti S.A."/>
            <person name="Radnedge L."/>
            <person name="Larimer F."/>
            <person name="Vergez L.M."/>
            <person name="Worsham P."/>
            <person name="Chu M.C."/>
            <person name="Andersen G.L."/>
        </authorList>
    </citation>
    <scope>NUCLEOTIDE SEQUENCE [LARGE SCALE GENOMIC DNA]</scope>
    <source>
        <strain>Antiqua</strain>
    </source>
</reference>
<proteinExistence type="inferred from homology"/>
<accession>Q1CBG0</accession>
<organism>
    <name type="scientific">Yersinia pestis bv. Antiqua (strain Antiqua)</name>
    <dbReference type="NCBI Taxonomy" id="360102"/>
    <lineage>
        <taxon>Bacteria</taxon>
        <taxon>Pseudomonadati</taxon>
        <taxon>Pseudomonadota</taxon>
        <taxon>Gammaproteobacteria</taxon>
        <taxon>Enterobacterales</taxon>
        <taxon>Yersiniaceae</taxon>
        <taxon>Yersinia</taxon>
    </lineage>
</organism>